<reference key="1">
    <citation type="journal article" date="2006" name="Nat. Biotechnol.">
        <title>Complete genome sequence of the entomopathogenic and metabolically versatile soil bacterium Pseudomonas entomophila.</title>
        <authorList>
            <person name="Vodovar N."/>
            <person name="Vallenet D."/>
            <person name="Cruveiller S."/>
            <person name="Rouy Z."/>
            <person name="Barbe V."/>
            <person name="Acosta C."/>
            <person name="Cattolico L."/>
            <person name="Jubin C."/>
            <person name="Lajus A."/>
            <person name="Segurens B."/>
            <person name="Vacherie B."/>
            <person name="Wincker P."/>
            <person name="Weissenbach J."/>
            <person name="Lemaitre B."/>
            <person name="Medigue C."/>
            <person name="Boccard F."/>
        </authorList>
    </citation>
    <scope>NUCLEOTIDE SEQUENCE [LARGE SCALE GENOMIC DNA]</scope>
    <source>
        <strain>L48</strain>
    </source>
</reference>
<name>TRMA_PSEE4</name>
<accession>Q1I4J8</accession>
<feature type="chain" id="PRO_0000281451" description="tRNA/tmRNA (uracil-C(5))-methyltransferase">
    <location>
        <begin position="1"/>
        <end position="361"/>
    </location>
</feature>
<feature type="active site" description="Nucleophile" evidence="1">
    <location>
        <position position="319"/>
    </location>
</feature>
<feature type="active site" description="Proton acceptor" evidence="1">
    <location>
        <position position="353"/>
    </location>
</feature>
<feature type="binding site" evidence="1">
    <location>
        <position position="185"/>
    </location>
    <ligand>
        <name>S-adenosyl-L-methionine</name>
        <dbReference type="ChEBI" id="CHEBI:59789"/>
    </ligand>
</feature>
<feature type="binding site" evidence="1">
    <location>
        <position position="213"/>
    </location>
    <ligand>
        <name>S-adenosyl-L-methionine</name>
        <dbReference type="ChEBI" id="CHEBI:59789"/>
    </ligand>
</feature>
<feature type="binding site" evidence="1">
    <location>
        <position position="218"/>
    </location>
    <ligand>
        <name>S-adenosyl-L-methionine</name>
        <dbReference type="ChEBI" id="CHEBI:59789"/>
    </ligand>
</feature>
<feature type="binding site" evidence="1">
    <location>
        <position position="234"/>
    </location>
    <ligand>
        <name>S-adenosyl-L-methionine</name>
        <dbReference type="ChEBI" id="CHEBI:59789"/>
    </ligand>
</feature>
<feature type="binding site" evidence="1">
    <location>
        <position position="294"/>
    </location>
    <ligand>
        <name>S-adenosyl-L-methionine</name>
        <dbReference type="ChEBI" id="CHEBI:59789"/>
    </ligand>
</feature>
<evidence type="ECO:0000255" key="1">
    <source>
        <dbReference type="HAMAP-Rule" id="MF_01011"/>
    </source>
</evidence>
<proteinExistence type="inferred from homology"/>
<dbReference type="EC" id="2.1.1.-" evidence="1"/>
<dbReference type="EC" id="2.1.1.35" evidence="1"/>
<dbReference type="EMBL" id="CT573326">
    <property type="protein sequence ID" value="CAK17438.1"/>
    <property type="molecule type" value="Genomic_DNA"/>
</dbReference>
<dbReference type="RefSeq" id="WP_011535800.1">
    <property type="nucleotide sequence ID" value="NC_008027.1"/>
</dbReference>
<dbReference type="SMR" id="Q1I4J8"/>
<dbReference type="STRING" id="384676.PSEEN4780"/>
<dbReference type="GeneID" id="32807741"/>
<dbReference type="KEGG" id="pen:PSEEN4780"/>
<dbReference type="eggNOG" id="COG2265">
    <property type="taxonomic scope" value="Bacteria"/>
</dbReference>
<dbReference type="HOGENOM" id="CLU_043022_0_0_6"/>
<dbReference type="OrthoDB" id="9804590at2"/>
<dbReference type="Proteomes" id="UP000000658">
    <property type="component" value="Chromosome"/>
</dbReference>
<dbReference type="GO" id="GO:0005829">
    <property type="term" value="C:cytosol"/>
    <property type="evidence" value="ECO:0007669"/>
    <property type="project" value="TreeGrafter"/>
</dbReference>
<dbReference type="GO" id="GO:0019843">
    <property type="term" value="F:rRNA binding"/>
    <property type="evidence" value="ECO:0007669"/>
    <property type="project" value="TreeGrafter"/>
</dbReference>
<dbReference type="GO" id="GO:0030697">
    <property type="term" value="F:tRNA (uracil(54)-C5)-methyltransferase activity, S-adenosyl methionine-dependent"/>
    <property type="evidence" value="ECO:0007669"/>
    <property type="project" value="UniProtKB-UniRule"/>
</dbReference>
<dbReference type="GO" id="GO:0000049">
    <property type="term" value="F:tRNA binding"/>
    <property type="evidence" value="ECO:0007669"/>
    <property type="project" value="TreeGrafter"/>
</dbReference>
<dbReference type="GO" id="GO:0030488">
    <property type="term" value="P:tRNA methylation"/>
    <property type="evidence" value="ECO:0007669"/>
    <property type="project" value="UniProtKB-UniRule"/>
</dbReference>
<dbReference type="CDD" id="cd02440">
    <property type="entry name" value="AdoMet_MTases"/>
    <property type="match status" value="1"/>
</dbReference>
<dbReference type="FunFam" id="2.40.50.1070:FF:000001">
    <property type="entry name" value="tRNA/tmRNA (uracil-C(5))-methyltransferase"/>
    <property type="match status" value="1"/>
</dbReference>
<dbReference type="FunFam" id="3.40.50.150:FF:000012">
    <property type="entry name" value="tRNA/tmRNA (uracil-C(5))-methyltransferase"/>
    <property type="match status" value="1"/>
</dbReference>
<dbReference type="Gene3D" id="2.40.50.1070">
    <property type="match status" value="1"/>
</dbReference>
<dbReference type="Gene3D" id="3.40.50.150">
    <property type="entry name" value="Vaccinia Virus protein VP39"/>
    <property type="match status" value="1"/>
</dbReference>
<dbReference type="HAMAP" id="MF_01011">
    <property type="entry name" value="RNA_methyltr_TrmA"/>
    <property type="match status" value="1"/>
</dbReference>
<dbReference type="InterPro" id="IPR030390">
    <property type="entry name" value="MeTrfase_TrmA_AS"/>
</dbReference>
<dbReference type="InterPro" id="IPR030391">
    <property type="entry name" value="MeTrfase_TrmA_CS"/>
</dbReference>
<dbReference type="InterPro" id="IPR029063">
    <property type="entry name" value="SAM-dependent_MTases_sf"/>
</dbReference>
<dbReference type="InterPro" id="IPR011869">
    <property type="entry name" value="TrmA_MeTrfase"/>
</dbReference>
<dbReference type="InterPro" id="IPR010280">
    <property type="entry name" value="U5_MeTrfase_fam"/>
</dbReference>
<dbReference type="NCBIfam" id="TIGR02143">
    <property type="entry name" value="trmA_only"/>
    <property type="match status" value="1"/>
</dbReference>
<dbReference type="PANTHER" id="PTHR47790">
    <property type="entry name" value="TRNA/TMRNA (URACIL-C(5))-METHYLTRANSFERASE"/>
    <property type="match status" value="1"/>
</dbReference>
<dbReference type="PANTHER" id="PTHR47790:SF2">
    <property type="entry name" value="TRNA_TMRNA (URACIL-C(5))-METHYLTRANSFERASE"/>
    <property type="match status" value="1"/>
</dbReference>
<dbReference type="Pfam" id="PF05958">
    <property type="entry name" value="tRNA_U5-meth_tr"/>
    <property type="match status" value="1"/>
</dbReference>
<dbReference type="SUPFAM" id="SSF53335">
    <property type="entry name" value="S-adenosyl-L-methionine-dependent methyltransferases"/>
    <property type="match status" value="1"/>
</dbReference>
<dbReference type="PROSITE" id="PS51687">
    <property type="entry name" value="SAM_MT_RNA_M5U"/>
    <property type="match status" value="1"/>
</dbReference>
<dbReference type="PROSITE" id="PS01230">
    <property type="entry name" value="TRMA_1"/>
    <property type="match status" value="1"/>
</dbReference>
<dbReference type="PROSITE" id="PS01231">
    <property type="entry name" value="TRMA_2"/>
    <property type="match status" value="1"/>
</dbReference>
<sequence>MSAVFDPSQYDAQLAAKAARLRELLAPFGAPEPSVFDSPREHYRLRAEFRLWREGGQRHYAMFAPGEKHKAILIDDFPIASQRINELMPRLKAAWQGNEDLNNRLFQVEFLTTLAGDAMVTLCYHRPLDEAWEAAAQQLASELNVSVIGRSKGKRVVIGRDYAVENLDIAGRTFSYRQPEGAFTQPNGAVNQKMLGWAFEAMGERDDDLLELYCGNGNFTLPLATRARQVLATEISKTSVNAALHNLDENGVDNVRLVRLSAEELTQALNEVRPFRRLEGIDLKSYDFGTVFVDPPRAGMDPDTCELTRRFERILYISCNPETLAQNIAQLQDTHRIERCALFDQFPYTHHMESGVLLVRR</sequence>
<comment type="function">
    <text evidence="1">Dual-specificity methyltransferase that catalyzes the formation of 5-methyluridine at position 54 (m5U54) in all tRNAs, and that of position 341 (m5U341) in tmRNA (transfer-mRNA).</text>
</comment>
<comment type="catalytic activity">
    <reaction evidence="1">
        <text>uridine(54) in tRNA + S-adenosyl-L-methionine = 5-methyluridine(54) in tRNA + S-adenosyl-L-homocysteine + H(+)</text>
        <dbReference type="Rhea" id="RHEA:42712"/>
        <dbReference type="Rhea" id="RHEA-COMP:10167"/>
        <dbReference type="Rhea" id="RHEA-COMP:10193"/>
        <dbReference type="ChEBI" id="CHEBI:15378"/>
        <dbReference type="ChEBI" id="CHEBI:57856"/>
        <dbReference type="ChEBI" id="CHEBI:59789"/>
        <dbReference type="ChEBI" id="CHEBI:65315"/>
        <dbReference type="ChEBI" id="CHEBI:74447"/>
        <dbReference type="EC" id="2.1.1.35"/>
    </reaction>
</comment>
<comment type="catalytic activity">
    <reaction evidence="1">
        <text>uridine(341) in tmRNA + S-adenosyl-L-methionine = 5-methyluridine(341) in tmRNA + S-adenosyl-L-homocysteine + H(+)</text>
        <dbReference type="Rhea" id="RHEA:43612"/>
        <dbReference type="Rhea" id="RHEA-COMP:10630"/>
        <dbReference type="Rhea" id="RHEA-COMP:10631"/>
        <dbReference type="ChEBI" id="CHEBI:15378"/>
        <dbReference type="ChEBI" id="CHEBI:57856"/>
        <dbReference type="ChEBI" id="CHEBI:59789"/>
        <dbReference type="ChEBI" id="CHEBI:65315"/>
        <dbReference type="ChEBI" id="CHEBI:74447"/>
    </reaction>
</comment>
<comment type="similarity">
    <text evidence="1">Belongs to the class I-like SAM-binding methyltransferase superfamily. RNA M5U methyltransferase family. TrmA subfamily.</text>
</comment>
<protein>
    <recommendedName>
        <fullName evidence="1">tRNA/tmRNA (uracil-C(5))-methyltransferase</fullName>
        <ecNumber evidence="1">2.1.1.-</ecNumber>
        <ecNumber evidence="1">2.1.1.35</ecNumber>
    </recommendedName>
    <alternativeName>
        <fullName evidence="1">tRNA (uracil(54)-C(5))-methyltransferase</fullName>
    </alternativeName>
    <alternativeName>
        <fullName evidence="1">tRNA(m5U54)-methyltransferase</fullName>
        <shortName evidence="1">RUMT</shortName>
    </alternativeName>
    <alternativeName>
        <fullName evidence="1">tmRNA (uracil(341)-C(5))-methyltransferase</fullName>
    </alternativeName>
</protein>
<gene>
    <name evidence="1" type="primary">trmA</name>
    <name type="ordered locus">PSEEN4780</name>
</gene>
<keyword id="KW-0489">Methyltransferase</keyword>
<keyword id="KW-0949">S-adenosyl-L-methionine</keyword>
<keyword id="KW-0808">Transferase</keyword>
<keyword id="KW-0819">tRNA processing</keyword>
<organism>
    <name type="scientific">Pseudomonas entomophila (strain L48)</name>
    <dbReference type="NCBI Taxonomy" id="384676"/>
    <lineage>
        <taxon>Bacteria</taxon>
        <taxon>Pseudomonadati</taxon>
        <taxon>Pseudomonadota</taxon>
        <taxon>Gammaproteobacteria</taxon>
        <taxon>Pseudomonadales</taxon>
        <taxon>Pseudomonadaceae</taxon>
        <taxon>Pseudomonas</taxon>
    </lineage>
</organism>